<sequence length="239" mass="26877">MFLEVETHCHTIASGHAYNTLEEMVAEAKNKGLKGICITDHGPEMPGSCSSLYFYNLVVVPRKIDGIMVFRGCEANIIDYEGSVDLPESALNRLDFVIASLHDVCIPPGTILDHTRALISAIKNPNILCIGHPGNPLYEIDKEAVVKTAKEHNKAIEINNASFYVREKSRENCIEILKLCKKYGVYIAMGSDAHFKTDIARCDVTRKLIEEYEFPHELIVNKSLENFLEFLRLHGKNIE</sequence>
<accession>A4XIQ6</accession>
<keyword id="KW-0378">Hydrolase</keyword>
<keyword id="KW-0479">Metal-binding</keyword>
<keyword id="KW-0862">Zinc</keyword>
<gene>
    <name type="ordered locus">Csac_1188</name>
</gene>
<evidence type="ECO:0000255" key="1">
    <source>
        <dbReference type="HAMAP-Rule" id="MF_01561"/>
    </source>
</evidence>
<feature type="chain" id="PRO_0000382655" description="Probable phosphatase Csac_1188">
    <location>
        <begin position="1"/>
        <end position="239"/>
    </location>
</feature>
<feature type="binding site" evidence="1">
    <location>
        <position position="8"/>
    </location>
    <ligand>
        <name>Zn(2+)</name>
        <dbReference type="ChEBI" id="CHEBI:29105"/>
        <label>1</label>
    </ligand>
</feature>
<feature type="binding site" evidence="1">
    <location>
        <position position="10"/>
    </location>
    <ligand>
        <name>Zn(2+)</name>
        <dbReference type="ChEBI" id="CHEBI:29105"/>
        <label>1</label>
    </ligand>
</feature>
<feature type="binding site" evidence="1">
    <location>
        <position position="16"/>
    </location>
    <ligand>
        <name>Zn(2+)</name>
        <dbReference type="ChEBI" id="CHEBI:29105"/>
        <label>2</label>
    </ligand>
</feature>
<feature type="binding site" evidence="1">
    <location>
        <position position="41"/>
    </location>
    <ligand>
        <name>Zn(2+)</name>
        <dbReference type="ChEBI" id="CHEBI:29105"/>
        <label>2</label>
    </ligand>
</feature>
<feature type="binding site" evidence="1">
    <location>
        <position position="74"/>
    </location>
    <ligand>
        <name>Zn(2+)</name>
        <dbReference type="ChEBI" id="CHEBI:29105"/>
        <label>1</label>
    </ligand>
</feature>
<feature type="binding site" evidence="1">
    <location>
        <position position="74"/>
    </location>
    <ligand>
        <name>Zn(2+)</name>
        <dbReference type="ChEBI" id="CHEBI:29105"/>
        <label>3</label>
    </ligand>
</feature>
<feature type="binding site" evidence="1">
    <location>
        <position position="102"/>
    </location>
    <ligand>
        <name>Zn(2+)</name>
        <dbReference type="ChEBI" id="CHEBI:29105"/>
        <label>3</label>
    </ligand>
</feature>
<feature type="binding site" evidence="1">
    <location>
        <position position="132"/>
    </location>
    <ligand>
        <name>Zn(2+)</name>
        <dbReference type="ChEBI" id="CHEBI:29105"/>
        <label>3</label>
    </ligand>
</feature>
<feature type="binding site" evidence="1">
    <location>
        <position position="192"/>
    </location>
    <ligand>
        <name>Zn(2+)</name>
        <dbReference type="ChEBI" id="CHEBI:29105"/>
        <label>1</label>
    </ligand>
</feature>
<feature type="binding site" evidence="1">
    <location>
        <position position="194"/>
    </location>
    <ligand>
        <name>Zn(2+)</name>
        <dbReference type="ChEBI" id="CHEBI:29105"/>
        <label>2</label>
    </ligand>
</feature>
<organism>
    <name type="scientific">Caldicellulosiruptor saccharolyticus (strain ATCC 43494 / DSM 8903 / Tp8T 6331)</name>
    <dbReference type="NCBI Taxonomy" id="351627"/>
    <lineage>
        <taxon>Bacteria</taxon>
        <taxon>Bacillati</taxon>
        <taxon>Bacillota</taxon>
        <taxon>Bacillota incertae sedis</taxon>
        <taxon>Caldicellulosiruptorales</taxon>
        <taxon>Caldicellulosiruptoraceae</taxon>
        <taxon>Caldicellulosiruptor</taxon>
    </lineage>
</organism>
<reference key="1">
    <citation type="submission" date="2007-04" db="EMBL/GenBank/DDBJ databases">
        <title>Genome sequence of the thermophilic hydrogen-producing bacterium Caldicellulosiruptor saccharolyticus DSM 8903.</title>
        <authorList>
            <person name="Copeland A."/>
            <person name="Lucas S."/>
            <person name="Lapidus A."/>
            <person name="Barry K."/>
            <person name="Detter J.C."/>
            <person name="Glavina del Rio T."/>
            <person name="Hammon N."/>
            <person name="Israni S."/>
            <person name="Dalin E."/>
            <person name="Tice H."/>
            <person name="Pitluck S."/>
            <person name="Kiss H."/>
            <person name="Brettin T."/>
            <person name="Bruce D."/>
            <person name="Han C."/>
            <person name="Schmutz J."/>
            <person name="Larimer F."/>
            <person name="Land M."/>
            <person name="Hauser L."/>
            <person name="Kyrpides N."/>
            <person name="Lykidis A."/>
            <person name="van de Werken H.J.G."/>
            <person name="Verhaart M.R.A."/>
            <person name="VanFossen A.L."/>
            <person name="Lewis D.L."/>
            <person name="Nichols J.D."/>
            <person name="Goorissen H.P."/>
            <person name="van Niel E.W.J."/>
            <person name="Stams F.J.M."/>
            <person name="Willquist K.U."/>
            <person name="Ward D.E."/>
            <person name="van der Oost J."/>
            <person name="Kelly R.M."/>
            <person name="Kengen S.M.W."/>
            <person name="Richardson P."/>
        </authorList>
    </citation>
    <scope>NUCLEOTIDE SEQUENCE [LARGE SCALE GENOMIC DNA]</scope>
    <source>
        <strain>ATCC 43494 / DSM 8903 / Tp8T 6331</strain>
    </source>
</reference>
<name>Y1188_CALS8</name>
<proteinExistence type="inferred from homology"/>
<dbReference type="EC" id="3.1.3.-" evidence="1"/>
<dbReference type="EMBL" id="CP000679">
    <property type="protein sequence ID" value="ABP66791.1"/>
    <property type="molecule type" value="Genomic_DNA"/>
</dbReference>
<dbReference type="RefSeq" id="WP_011916727.1">
    <property type="nucleotide sequence ID" value="NC_009437.1"/>
</dbReference>
<dbReference type="SMR" id="A4XIQ6"/>
<dbReference type="STRING" id="351627.Csac_1188"/>
<dbReference type="KEGG" id="csc:Csac_1188"/>
<dbReference type="eggNOG" id="COG1387">
    <property type="taxonomic scope" value="Bacteria"/>
</dbReference>
<dbReference type="HOGENOM" id="CLU_061999_0_1_9"/>
<dbReference type="OrthoDB" id="9808747at2"/>
<dbReference type="Proteomes" id="UP000000256">
    <property type="component" value="Chromosome"/>
</dbReference>
<dbReference type="GO" id="GO:0005829">
    <property type="term" value="C:cytosol"/>
    <property type="evidence" value="ECO:0007669"/>
    <property type="project" value="TreeGrafter"/>
</dbReference>
<dbReference type="GO" id="GO:0042578">
    <property type="term" value="F:phosphoric ester hydrolase activity"/>
    <property type="evidence" value="ECO:0007669"/>
    <property type="project" value="TreeGrafter"/>
</dbReference>
<dbReference type="GO" id="GO:0008270">
    <property type="term" value="F:zinc ion binding"/>
    <property type="evidence" value="ECO:0007669"/>
    <property type="project" value="InterPro"/>
</dbReference>
<dbReference type="CDD" id="cd07437">
    <property type="entry name" value="PHP_HisPPase_Ycdx_like"/>
    <property type="match status" value="1"/>
</dbReference>
<dbReference type="Gene3D" id="3.20.20.140">
    <property type="entry name" value="Metal-dependent hydrolases"/>
    <property type="match status" value="1"/>
</dbReference>
<dbReference type="HAMAP" id="MF_01561">
    <property type="entry name" value="YcdX_phosphat"/>
    <property type="match status" value="1"/>
</dbReference>
<dbReference type="InterPro" id="IPR023710">
    <property type="entry name" value="Phosphatase_YcdX_put"/>
</dbReference>
<dbReference type="InterPro" id="IPR004013">
    <property type="entry name" value="PHP_dom"/>
</dbReference>
<dbReference type="InterPro" id="IPR050243">
    <property type="entry name" value="PHP_phosphatase"/>
</dbReference>
<dbReference type="InterPro" id="IPR003141">
    <property type="entry name" value="Pol/His_phosphatase_N"/>
</dbReference>
<dbReference type="InterPro" id="IPR016195">
    <property type="entry name" value="Pol/histidinol_Pase-like"/>
</dbReference>
<dbReference type="NCBIfam" id="NF006702">
    <property type="entry name" value="PRK09248.1"/>
    <property type="match status" value="1"/>
</dbReference>
<dbReference type="PANTHER" id="PTHR36928">
    <property type="entry name" value="PHOSPHATASE YCDX-RELATED"/>
    <property type="match status" value="1"/>
</dbReference>
<dbReference type="PANTHER" id="PTHR36928:SF1">
    <property type="entry name" value="PHOSPHATASE YCDX-RELATED"/>
    <property type="match status" value="1"/>
</dbReference>
<dbReference type="Pfam" id="PF02811">
    <property type="entry name" value="PHP"/>
    <property type="match status" value="1"/>
</dbReference>
<dbReference type="SMART" id="SM00481">
    <property type="entry name" value="POLIIIAc"/>
    <property type="match status" value="1"/>
</dbReference>
<dbReference type="SUPFAM" id="SSF89550">
    <property type="entry name" value="PHP domain-like"/>
    <property type="match status" value="1"/>
</dbReference>
<protein>
    <recommendedName>
        <fullName evidence="1">Probable phosphatase Csac_1188</fullName>
        <ecNumber evidence="1">3.1.3.-</ecNumber>
    </recommendedName>
</protein>
<comment type="cofactor">
    <cofactor evidence="1">
        <name>Zn(2+)</name>
        <dbReference type="ChEBI" id="CHEBI:29105"/>
    </cofactor>
    <text evidence="1">Binds 3 Zn(2+) ions per subunit.</text>
</comment>
<comment type="similarity">
    <text evidence="1">Belongs to the PHP family.</text>
</comment>